<protein>
    <recommendedName>
        <fullName evidence="1">Bifunctional purine biosynthesis protein PurH</fullName>
    </recommendedName>
    <domain>
        <recommendedName>
            <fullName evidence="1">Phosphoribosylaminoimidazolecarboxamide formyltransferase</fullName>
            <ecNumber evidence="1">2.1.2.3</ecNumber>
        </recommendedName>
        <alternativeName>
            <fullName evidence="1">AICAR transformylase</fullName>
        </alternativeName>
    </domain>
    <domain>
        <recommendedName>
            <fullName evidence="1">IMP cyclohydrolase</fullName>
            <ecNumber evidence="1">3.5.4.10</ecNumber>
        </recommendedName>
        <alternativeName>
            <fullName evidence="1">ATIC</fullName>
        </alternativeName>
        <alternativeName>
            <fullName evidence="1">IMP synthase</fullName>
        </alternativeName>
        <alternativeName>
            <fullName evidence="1">Inosinicase</fullName>
        </alternativeName>
    </domain>
</protein>
<gene>
    <name evidence="1" type="primary">purH</name>
    <name type="ordered locus">SSP1717</name>
</gene>
<organism>
    <name type="scientific">Staphylococcus saprophyticus subsp. saprophyticus (strain ATCC 15305 / DSM 20229 / NCIMB 8711 / NCTC 7292 / S-41)</name>
    <dbReference type="NCBI Taxonomy" id="342451"/>
    <lineage>
        <taxon>Bacteria</taxon>
        <taxon>Bacillati</taxon>
        <taxon>Bacillota</taxon>
        <taxon>Bacilli</taxon>
        <taxon>Bacillales</taxon>
        <taxon>Staphylococcaceae</taxon>
        <taxon>Staphylococcus</taxon>
    </lineage>
</organism>
<reference key="1">
    <citation type="journal article" date="2005" name="Proc. Natl. Acad. Sci. U.S.A.">
        <title>Whole genome sequence of Staphylococcus saprophyticus reveals the pathogenesis of uncomplicated urinary tract infection.</title>
        <authorList>
            <person name="Kuroda M."/>
            <person name="Yamashita A."/>
            <person name="Hirakawa H."/>
            <person name="Kumano M."/>
            <person name="Morikawa K."/>
            <person name="Higashide M."/>
            <person name="Maruyama A."/>
            <person name="Inose Y."/>
            <person name="Matoba K."/>
            <person name="Toh H."/>
            <person name="Kuhara S."/>
            <person name="Hattori M."/>
            <person name="Ohta T."/>
        </authorList>
    </citation>
    <scope>NUCLEOTIDE SEQUENCE [LARGE SCALE GENOMIC DNA]</scope>
    <source>
        <strain>ATCC 15305 / DSM 20229 / NCIMB 8711 / NCTC 7292 / S-41</strain>
    </source>
</reference>
<comment type="catalytic activity">
    <reaction evidence="1">
        <text>(6R)-10-formyltetrahydrofolate + 5-amino-1-(5-phospho-beta-D-ribosyl)imidazole-4-carboxamide = 5-formamido-1-(5-phospho-D-ribosyl)imidazole-4-carboxamide + (6S)-5,6,7,8-tetrahydrofolate</text>
        <dbReference type="Rhea" id="RHEA:22192"/>
        <dbReference type="ChEBI" id="CHEBI:57453"/>
        <dbReference type="ChEBI" id="CHEBI:58467"/>
        <dbReference type="ChEBI" id="CHEBI:58475"/>
        <dbReference type="ChEBI" id="CHEBI:195366"/>
        <dbReference type="EC" id="2.1.2.3"/>
    </reaction>
</comment>
<comment type="catalytic activity">
    <reaction evidence="1">
        <text>IMP + H2O = 5-formamido-1-(5-phospho-D-ribosyl)imidazole-4-carboxamide</text>
        <dbReference type="Rhea" id="RHEA:18445"/>
        <dbReference type="ChEBI" id="CHEBI:15377"/>
        <dbReference type="ChEBI" id="CHEBI:58053"/>
        <dbReference type="ChEBI" id="CHEBI:58467"/>
        <dbReference type="EC" id="3.5.4.10"/>
    </reaction>
</comment>
<comment type="pathway">
    <text evidence="1">Purine metabolism; IMP biosynthesis via de novo pathway; 5-formamido-1-(5-phospho-D-ribosyl)imidazole-4-carboxamide from 5-amino-1-(5-phospho-D-ribosyl)imidazole-4-carboxamide (10-formyl THF route): step 1/1.</text>
</comment>
<comment type="pathway">
    <text evidence="1">Purine metabolism; IMP biosynthesis via de novo pathway; IMP from 5-formamido-1-(5-phospho-D-ribosyl)imidazole-4-carboxamide: step 1/1.</text>
</comment>
<comment type="domain">
    <text evidence="1">The IMP cyclohydrolase activity resides in the N-terminal region.</text>
</comment>
<comment type="similarity">
    <text evidence="1">Belongs to the PurH family.</text>
</comment>
<accession>Q49WJ7</accession>
<evidence type="ECO:0000255" key="1">
    <source>
        <dbReference type="HAMAP-Rule" id="MF_00139"/>
    </source>
</evidence>
<evidence type="ECO:0000255" key="2">
    <source>
        <dbReference type="PROSITE-ProRule" id="PRU01202"/>
    </source>
</evidence>
<keyword id="KW-0378">Hydrolase</keyword>
<keyword id="KW-0511">Multifunctional enzyme</keyword>
<keyword id="KW-0658">Purine biosynthesis</keyword>
<keyword id="KW-1185">Reference proteome</keyword>
<keyword id="KW-0808">Transferase</keyword>
<dbReference type="EC" id="2.1.2.3" evidence="1"/>
<dbReference type="EC" id="3.5.4.10" evidence="1"/>
<dbReference type="EMBL" id="AP008934">
    <property type="protein sequence ID" value="BAE18862.1"/>
    <property type="molecule type" value="Genomic_DNA"/>
</dbReference>
<dbReference type="RefSeq" id="WP_011303432.1">
    <property type="nucleotide sequence ID" value="NC_007350.1"/>
</dbReference>
<dbReference type="SMR" id="Q49WJ7"/>
<dbReference type="GeneID" id="3616626"/>
<dbReference type="KEGG" id="ssp:SSP1717"/>
<dbReference type="PATRIC" id="fig|342451.11.peg.1716"/>
<dbReference type="eggNOG" id="COG0138">
    <property type="taxonomic scope" value="Bacteria"/>
</dbReference>
<dbReference type="HOGENOM" id="CLU_016316_5_2_9"/>
<dbReference type="OrthoDB" id="9802065at2"/>
<dbReference type="UniPathway" id="UPA00074">
    <property type="reaction ID" value="UER00133"/>
</dbReference>
<dbReference type="UniPathway" id="UPA00074">
    <property type="reaction ID" value="UER00135"/>
</dbReference>
<dbReference type="Proteomes" id="UP000006371">
    <property type="component" value="Chromosome"/>
</dbReference>
<dbReference type="GO" id="GO:0005829">
    <property type="term" value="C:cytosol"/>
    <property type="evidence" value="ECO:0007669"/>
    <property type="project" value="TreeGrafter"/>
</dbReference>
<dbReference type="GO" id="GO:0003937">
    <property type="term" value="F:IMP cyclohydrolase activity"/>
    <property type="evidence" value="ECO:0007669"/>
    <property type="project" value="UniProtKB-UniRule"/>
</dbReference>
<dbReference type="GO" id="GO:0004643">
    <property type="term" value="F:phosphoribosylaminoimidazolecarboxamide formyltransferase activity"/>
    <property type="evidence" value="ECO:0007669"/>
    <property type="project" value="UniProtKB-UniRule"/>
</dbReference>
<dbReference type="GO" id="GO:0006189">
    <property type="term" value="P:'de novo' IMP biosynthetic process"/>
    <property type="evidence" value="ECO:0007669"/>
    <property type="project" value="UniProtKB-UniRule"/>
</dbReference>
<dbReference type="CDD" id="cd01421">
    <property type="entry name" value="IMPCH"/>
    <property type="match status" value="1"/>
</dbReference>
<dbReference type="FunFam" id="3.40.140.20:FF:000001">
    <property type="entry name" value="Bifunctional purine biosynthesis protein PurH"/>
    <property type="match status" value="1"/>
</dbReference>
<dbReference type="FunFam" id="3.40.140.20:FF:000002">
    <property type="entry name" value="Bifunctional purine biosynthesis protein PurH"/>
    <property type="match status" value="1"/>
</dbReference>
<dbReference type="FunFam" id="3.40.50.1380:FF:000001">
    <property type="entry name" value="Bifunctional purine biosynthesis protein PurH"/>
    <property type="match status" value="1"/>
</dbReference>
<dbReference type="Gene3D" id="3.40.140.20">
    <property type="match status" value="2"/>
</dbReference>
<dbReference type="Gene3D" id="3.40.50.1380">
    <property type="entry name" value="Methylglyoxal synthase-like domain"/>
    <property type="match status" value="1"/>
</dbReference>
<dbReference type="HAMAP" id="MF_00139">
    <property type="entry name" value="PurH"/>
    <property type="match status" value="1"/>
</dbReference>
<dbReference type="InterPro" id="IPR024051">
    <property type="entry name" value="AICAR_Tfase_dup_dom_sf"/>
</dbReference>
<dbReference type="InterPro" id="IPR016193">
    <property type="entry name" value="Cytidine_deaminase-like"/>
</dbReference>
<dbReference type="InterPro" id="IPR011607">
    <property type="entry name" value="MGS-like_dom"/>
</dbReference>
<dbReference type="InterPro" id="IPR036914">
    <property type="entry name" value="MGS-like_dom_sf"/>
</dbReference>
<dbReference type="InterPro" id="IPR002695">
    <property type="entry name" value="PurH-like"/>
</dbReference>
<dbReference type="NCBIfam" id="NF002049">
    <property type="entry name" value="PRK00881.1"/>
    <property type="match status" value="1"/>
</dbReference>
<dbReference type="NCBIfam" id="TIGR00355">
    <property type="entry name" value="purH"/>
    <property type="match status" value="1"/>
</dbReference>
<dbReference type="PANTHER" id="PTHR11692:SF0">
    <property type="entry name" value="BIFUNCTIONAL PURINE BIOSYNTHESIS PROTEIN ATIC"/>
    <property type="match status" value="1"/>
</dbReference>
<dbReference type="PANTHER" id="PTHR11692">
    <property type="entry name" value="BIFUNCTIONAL PURINE BIOSYNTHESIS PROTEIN PURH"/>
    <property type="match status" value="1"/>
</dbReference>
<dbReference type="Pfam" id="PF01808">
    <property type="entry name" value="AICARFT_IMPCHas"/>
    <property type="match status" value="1"/>
</dbReference>
<dbReference type="Pfam" id="PF02142">
    <property type="entry name" value="MGS"/>
    <property type="match status" value="1"/>
</dbReference>
<dbReference type="PIRSF" id="PIRSF000414">
    <property type="entry name" value="AICARFT_IMPCHas"/>
    <property type="match status" value="1"/>
</dbReference>
<dbReference type="SMART" id="SM00798">
    <property type="entry name" value="AICARFT_IMPCHas"/>
    <property type="match status" value="1"/>
</dbReference>
<dbReference type="SMART" id="SM00851">
    <property type="entry name" value="MGS"/>
    <property type="match status" value="1"/>
</dbReference>
<dbReference type="SUPFAM" id="SSF53927">
    <property type="entry name" value="Cytidine deaminase-like"/>
    <property type="match status" value="1"/>
</dbReference>
<dbReference type="SUPFAM" id="SSF52335">
    <property type="entry name" value="Methylglyoxal synthase-like"/>
    <property type="match status" value="1"/>
</dbReference>
<dbReference type="PROSITE" id="PS51855">
    <property type="entry name" value="MGS"/>
    <property type="match status" value="1"/>
</dbReference>
<feature type="chain" id="PRO_1000018965" description="Bifunctional purine biosynthesis protein PurH">
    <location>
        <begin position="1"/>
        <end position="492"/>
    </location>
</feature>
<feature type="domain" description="MGS-like" evidence="2">
    <location>
        <begin position="1"/>
        <end position="144"/>
    </location>
</feature>
<sequence length="492" mass="53875">MKKAILSVSNKAGIVTFGQSLIEQNYELYSTGGTMRELANGGLPVKSISELTEFEEIMDGRVKTLHPSVHGGILADRDKPEHLEQLQAQGIDLIDMVVVNLYPFKETVANPNVTEEDAIENIDIGGPTMLRAAAKNFKHVITVVHPADYNEVIDKLKNGTLDEAYRKSLMIKVFEHTNEYDAAIVDYFKDNKESLRYGENPQQSAYFVRTSDAKHTLAGAKQLHGKQLSYNNIKDADAALSLVKQFEQPAAVAVKHMNPCGVGVAETIDEAYKHAFDADNQSIFGGIVALNRTVEKSLAEVLHGIFLEVVIAPKFTQEALEVLGKKKNIRLLEIDMTIDNSEQELVSVSGGYLVQDKDNVKLNREDMTVVTEVEPTEAQWDAMLLGWKVVASVKSNAVILSNAKQTVGIGAGQMNRVGSAQIAIERAIEINDDVAMVSDGFFPMDDTVELAANSGIKAIIQPGGSIKDQESIDMANKHGIAMVTTGVRHFKH</sequence>
<name>PUR9_STAS1</name>
<proteinExistence type="inferred from homology"/>